<gene>
    <name type="primary">MT-CYB</name>
    <name type="synonym">COB</name>
    <name type="synonym">CYTB</name>
    <name type="synonym">MTCYB</name>
</gene>
<geneLocation type="mitochondrion"/>
<proteinExistence type="inferred from homology"/>
<reference key="1">
    <citation type="journal article" date="1997" name="Proc. R. Soc. B">
        <title>DNA phylogeny of the marsupial wolf resolved.</title>
        <authorList>
            <person name="Krajewski C."/>
            <person name="Buckley L."/>
            <person name="Westerman M."/>
        </authorList>
    </citation>
    <scope>NUCLEOTIDE SEQUENCE [GENOMIC DNA]</scope>
</reference>
<sequence length="381" mass="42865">MVNLRKTHPLMKIINHSFIDLPAPSNISAWWNFGSLLGICLIIQILTGLFLAMHYTSDTYTAFSSVAHICRDVNYGWLIRNLHANGASMFFMCLFLHVGRGIYYGSYLYKETWNIGVILLLTVMATAFVGYVLPWGQMSFWGATVITNLLSAIPYIGTTLVEWIWGGFSVDKATLTRFFAFHFILPFIIAALAIVHLIFLHETGSNNPSGINPDADKIPFHPYYTIKDALGLLFLLLLLLSLALFSPDLLGDPDNFSPANPLNTPPHIKPEWYFLFAYAILRSIPNKLGGVLALLASIMILLIIPLLHTSNQRSMTFRPISQILYWILAANLLVLTWIGGQPVEQPFIIIGQLASILYFLLIILLMPLAGLFENYMLEPKW</sequence>
<dbReference type="EMBL" id="U87135">
    <property type="protein sequence ID" value="AAB91323.1"/>
    <property type="molecule type" value="Genomic_DNA"/>
</dbReference>
<dbReference type="SMR" id="O03478"/>
<dbReference type="GO" id="GO:0005743">
    <property type="term" value="C:mitochondrial inner membrane"/>
    <property type="evidence" value="ECO:0007669"/>
    <property type="project" value="UniProtKB-SubCell"/>
</dbReference>
<dbReference type="GO" id="GO:0045275">
    <property type="term" value="C:respiratory chain complex III"/>
    <property type="evidence" value="ECO:0007669"/>
    <property type="project" value="InterPro"/>
</dbReference>
<dbReference type="GO" id="GO:0046872">
    <property type="term" value="F:metal ion binding"/>
    <property type="evidence" value="ECO:0007669"/>
    <property type="project" value="UniProtKB-KW"/>
</dbReference>
<dbReference type="GO" id="GO:0008121">
    <property type="term" value="F:ubiquinol-cytochrome-c reductase activity"/>
    <property type="evidence" value="ECO:0007669"/>
    <property type="project" value="InterPro"/>
</dbReference>
<dbReference type="GO" id="GO:0006122">
    <property type="term" value="P:mitochondrial electron transport, ubiquinol to cytochrome c"/>
    <property type="evidence" value="ECO:0007669"/>
    <property type="project" value="TreeGrafter"/>
</dbReference>
<dbReference type="CDD" id="cd00290">
    <property type="entry name" value="cytochrome_b_C"/>
    <property type="match status" value="1"/>
</dbReference>
<dbReference type="CDD" id="cd00284">
    <property type="entry name" value="Cytochrome_b_N"/>
    <property type="match status" value="1"/>
</dbReference>
<dbReference type="FunFam" id="1.20.810.10:FF:000002">
    <property type="entry name" value="Cytochrome b"/>
    <property type="match status" value="1"/>
</dbReference>
<dbReference type="Gene3D" id="1.20.810.10">
    <property type="entry name" value="Cytochrome Bc1 Complex, Chain C"/>
    <property type="match status" value="1"/>
</dbReference>
<dbReference type="InterPro" id="IPR005798">
    <property type="entry name" value="Cyt_b/b6_C"/>
</dbReference>
<dbReference type="InterPro" id="IPR036150">
    <property type="entry name" value="Cyt_b/b6_C_sf"/>
</dbReference>
<dbReference type="InterPro" id="IPR005797">
    <property type="entry name" value="Cyt_b/b6_N"/>
</dbReference>
<dbReference type="InterPro" id="IPR027387">
    <property type="entry name" value="Cytb/b6-like_sf"/>
</dbReference>
<dbReference type="InterPro" id="IPR030689">
    <property type="entry name" value="Cytochrome_b"/>
</dbReference>
<dbReference type="InterPro" id="IPR048260">
    <property type="entry name" value="Cytochrome_b_C_euk/bac"/>
</dbReference>
<dbReference type="InterPro" id="IPR048259">
    <property type="entry name" value="Cytochrome_b_N_euk/bac"/>
</dbReference>
<dbReference type="InterPro" id="IPR016174">
    <property type="entry name" value="Di-haem_cyt_TM"/>
</dbReference>
<dbReference type="PANTHER" id="PTHR19271">
    <property type="entry name" value="CYTOCHROME B"/>
    <property type="match status" value="1"/>
</dbReference>
<dbReference type="PANTHER" id="PTHR19271:SF16">
    <property type="entry name" value="CYTOCHROME B"/>
    <property type="match status" value="1"/>
</dbReference>
<dbReference type="Pfam" id="PF00032">
    <property type="entry name" value="Cytochrom_B_C"/>
    <property type="match status" value="1"/>
</dbReference>
<dbReference type="Pfam" id="PF00033">
    <property type="entry name" value="Cytochrome_B"/>
    <property type="match status" value="1"/>
</dbReference>
<dbReference type="PIRSF" id="PIRSF038885">
    <property type="entry name" value="COB"/>
    <property type="match status" value="1"/>
</dbReference>
<dbReference type="SUPFAM" id="SSF81648">
    <property type="entry name" value="a domain/subunit of cytochrome bc1 complex (Ubiquinol-cytochrome c reductase)"/>
    <property type="match status" value="1"/>
</dbReference>
<dbReference type="SUPFAM" id="SSF81342">
    <property type="entry name" value="Transmembrane di-heme cytochromes"/>
    <property type="match status" value="1"/>
</dbReference>
<dbReference type="PROSITE" id="PS51003">
    <property type="entry name" value="CYTB_CTER"/>
    <property type="match status" value="1"/>
</dbReference>
<dbReference type="PROSITE" id="PS51002">
    <property type="entry name" value="CYTB_NTER"/>
    <property type="match status" value="1"/>
</dbReference>
<name>CYB_NOTTY</name>
<keyword id="KW-0249">Electron transport</keyword>
<keyword id="KW-0349">Heme</keyword>
<keyword id="KW-0408">Iron</keyword>
<keyword id="KW-0472">Membrane</keyword>
<keyword id="KW-0479">Metal-binding</keyword>
<keyword id="KW-0496">Mitochondrion</keyword>
<keyword id="KW-0999">Mitochondrion inner membrane</keyword>
<keyword id="KW-0679">Respiratory chain</keyword>
<keyword id="KW-0812">Transmembrane</keyword>
<keyword id="KW-1133">Transmembrane helix</keyword>
<keyword id="KW-0813">Transport</keyword>
<keyword id="KW-0830">Ubiquinone</keyword>
<comment type="function">
    <text evidence="2">Component of the ubiquinol-cytochrome c reductase complex (complex III or cytochrome b-c1 complex) that is part of the mitochondrial respiratory chain. The b-c1 complex mediates electron transfer from ubiquinol to cytochrome c. Contributes to the generation of a proton gradient across the mitochondrial membrane that is then used for ATP synthesis.</text>
</comment>
<comment type="cofactor">
    <cofactor evidence="2">
        <name>heme b</name>
        <dbReference type="ChEBI" id="CHEBI:60344"/>
    </cofactor>
    <text evidence="2">Binds 2 heme b groups non-covalently.</text>
</comment>
<comment type="subunit">
    <text evidence="2">The cytochrome bc1 complex contains 11 subunits: 3 respiratory subunits (MT-CYB, CYC1 and UQCRFS1), 2 core proteins (UQCRC1 and UQCRC2) and 6 low-molecular weight proteins (UQCRH/QCR6, UQCRB/QCR7, UQCRQ/QCR8, UQCR10/QCR9, UQCR11/QCR10 and a cleavage product of UQCRFS1). This cytochrome bc1 complex then forms a dimer.</text>
</comment>
<comment type="subcellular location">
    <subcellularLocation>
        <location evidence="2">Mitochondrion inner membrane</location>
        <topology evidence="2">Multi-pass membrane protein</topology>
    </subcellularLocation>
</comment>
<comment type="miscellaneous">
    <text evidence="1">Heme 1 (or BL or b562) is low-potential and absorbs at about 562 nm, and heme 2 (or BH or b566) is high-potential and absorbs at about 566 nm.</text>
</comment>
<comment type="similarity">
    <text evidence="3 4">Belongs to the cytochrome b family.</text>
</comment>
<comment type="caution">
    <text evidence="2">The full-length protein contains only eight transmembrane helices, not nine as predicted by bioinformatics tools.</text>
</comment>
<protein>
    <recommendedName>
        <fullName>Cytochrome b</fullName>
    </recommendedName>
    <alternativeName>
        <fullName>Complex III subunit 3</fullName>
    </alternativeName>
    <alternativeName>
        <fullName>Complex III subunit III</fullName>
    </alternativeName>
    <alternativeName>
        <fullName>Cytochrome b-c1 complex subunit 3</fullName>
    </alternativeName>
    <alternativeName>
        <fullName>Ubiquinol-cytochrome-c reductase complex cytochrome b subunit</fullName>
    </alternativeName>
</protein>
<feature type="chain" id="PRO_0000061283" description="Cytochrome b">
    <location>
        <begin position="1"/>
        <end position="381"/>
    </location>
</feature>
<feature type="transmembrane region" description="Helical" evidence="2">
    <location>
        <begin position="33"/>
        <end position="53"/>
    </location>
</feature>
<feature type="transmembrane region" description="Helical" evidence="2">
    <location>
        <begin position="77"/>
        <end position="98"/>
    </location>
</feature>
<feature type="transmembrane region" description="Helical" evidence="2">
    <location>
        <begin position="113"/>
        <end position="133"/>
    </location>
</feature>
<feature type="transmembrane region" description="Helical" evidence="2">
    <location>
        <begin position="178"/>
        <end position="198"/>
    </location>
</feature>
<feature type="transmembrane region" description="Helical" evidence="2">
    <location>
        <begin position="226"/>
        <end position="246"/>
    </location>
</feature>
<feature type="transmembrane region" description="Helical" evidence="2">
    <location>
        <begin position="288"/>
        <end position="308"/>
    </location>
</feature>
<feature type="transmembrane region" description="Helical" evidence="2">
    <location>
        <begin position="320"/>
        <end position="340"/>
    </location>
</feature>
<feature type="transmembrane region" description="Helical" evidence="2">
    <location>
        <begin position="347"/>
        <end position="367"/>
    </location>
</feature>
<feature type="binding site" description="axial binding residue" evidence="2">
    <location>
        <position position="83"/>
    </location>
    <ligand>
        <name>heme b</name>
        <dbReference type="ChEBI" id="CHEBI:60344"/>
        <label>b562</label>
    </ligand>
    <ligandPart>
        <name>Fe</name>
        <dbReference type="ChEBI" id="CHEBI:18248"/>
    </ligandPart>
</feature>
<feature type="binding site" description="axial binding residue" evidence="2">
    <location>
        <position position="97"/>
    </location>
    <ligand>
        <name>heme b</name>
        <dbReference type="ChEBI" id="CHEBI:60344"/>
        <label>b566</label>
    </ligand>
    <ligandPart>
        <name>Fe</name>
        <dbReference type="ChEBI" id="CHEBI:18248"/>
    </ligandPart>
</feature>
<feature type="binding site" description="axial binding residue" evidence="2">
    <location>
        <position position="182"/>
    </location>
    <ligand>
        <name>heme b</name>
        <dbReference type="ChEBI" id="CHEBI:60344"/>
        <label>b562</label>
    </ligand>
    <ligandPart>
        <name>Fe</name>
        <dbReference type="ChEBI" id="CHEBI:18248"/>
    </ligandPart>
</feature>
<feature type="binding site" description="axial binding residue" evidence="2">
    <location>
        <position position="196"/>
    </location>
    <ligand>
        <name>heme b</name>
        <dbReference type="ChEBI" id="CHEBI:60344"/>
        <label>b566</label>
    </ligand>
    <ligandPart>
        <name>Fe</name>
        <dbReference type="ChEBI" id="CHEBI:18248"/>
    </ligandPart>
</feature>
<feature type="binding site" evidence="2">
    <location>
        <position position="201"/>
    </location>
    <ligand>
        <name>a ubiquinone</name>
        <dbReference type="ChEBI" id="CHEBI:16389"/>
    </ligand>
</feature>
<organism>
    <name type="scientific">Notoryctes typhlops</name>
    <name type="common">Southern marsupial mole</name>
    <name type="synonym">Psammoryctes typhlops</name>
    <dbReference type="NCBI Taxonomy" id="37699"/>
    <lineage>
        <taxon>Eukaryota</taxon>
        <taxon>Metazoa</taxon>
        <taxon>Chordata</taxon>
        <taxon>Craniata</taxon>
        <taxon>Vertebrata</taxon>
        <taxon>Euteleostomi</taxon>
        <taxon>Mammalia</taxon>
        <taxon>Metatheria</taxon>
        <taxon>Notoryctemorphia</taxon>
        <taxon>Notoryctidae</taxon>
        <taxon>Notoryctes</taxon>
    </lineage>
</organism>
<accession>O03478</accession>
<evidence type="ECO:0000250" key="1"/>
<evidence type="ECO:0000250" key="2">
    <source>
        <dbReference type="UniProtKB" id="P00157"/>
    </source>
</evidence>
<evidence type="ECO:0000255" key="3">
    <source>
        <dbReference type="PROSITE-ProRule" id="PRU00967"/>
    </source>
</evidence>
<evidence type="ECO:0000255" key="4">
    <source>
        <dbReference type="PROSITE-ProRule" id="PRU00968"/>
    </source>
</evidence>